<evidence type="ECO:0000250" key="1">
    <source>
        <dbReference type="UniProtKB" id="P19836"/>
    </source>
</evidence>
<evidence type="ECO:0000256" key="2">
    <source>
        <dbReference type="SAM" id="MobiDB-lite"/>
    </source>
</evidence>
<evidence type="ECO:0000269" key="3">
    <source>
    </source>
</evidence>
<evidence type="ECO:0000269" key="4">
    <source>
    </source>
</evidence>
<evidence type="ECO:0000303" key="5">
    <source>
    </source>
</evidence>
<evidence type="ECO:0000303" key="6">
    <source>
    </source>
</evidence>
<evidence type="ECO:0000305" key="7"/>
<evidence type="ECO:0000312" key="8">
    <source>
        <dbReference type="Araport" id="AT4G15130"/>
    </source>
</evidence>
<evidence type="ECO:0000312" key="9">
    <source>
        <dbReference type="EMBL" id="CAB45996.1"/>
    </source>
</evidence>
<evidence type="ECO:0000312" key="10">
    <source>
        <dbReference type="EMBL" id="CAB78555.1"/>
    </source>
</evidence>
<reference key="1">
    <citation type="journal article" date="2002" name="Plant Cell Physiol.">
        <title>Phosphatidylcholine biosynthesis at low temperature: differential expression of CTP:phosphorylcholine cytidylyltransferase isogenes in Arabidopsis thaliana.</title>
        <authorList>
            <person name="Inatsugi R."/>
            <person name="Nakamura M."/>
            <person name="Nishida I."/>
        </authorList>
    </citation>
    <scope>NUCLEOTIDE SEQUENCE [GENOMIC DNA / MRNA]</scope>
    <scope>FUNCTION</scope>
    <scope>CATALYTIC ACTIVITY</scope>
    <scope>BIOPHYSICOCHEMICAL PROPERTIES</scope>
    <scope>INDUCTION BY COLD</scope>
    <source>
        <strain>cv. Columbia</strain>
    </source>
</reference>
<reference key="2">
    <citation type="journal article" date="1998" name="Nature">
        <title>Analysis of 1.9 Mb of contiguous sequence from chromosome 4 of Arabidopsis thaliana.</title>
        <authorList>
            <person name="Bevan M."/>
            <person name="Bancroft I."/>
            <person name="Bent E."/>
            <person name="Love K."/>
            <person name="Goodman H.M."/>
            <person name="Dean C."/>
            <person name="Bergkamp R."/>
            <person name="Dirkse W."/>
            <person name="van Staveren M."/>
            <person name="Stiekema W."/>
            <person name="Drost L."/>
            <person name="Ridley P."/>
            <person name="Hudson S.-A."/>
            <person name="Patel K."/>
            <person name="Murphy G."/>
            <person name="Piffanelli P."/>
            <person name="Wedler H."/>
            <person name="Wedler E."/>
            <person name="Wambutt R."/>
            <person name="Weitzenegger T."/>
            <person name="Pohl T."/>
            <person name="Terryn N."/>
            <person name="Gielen J."/>
            <person name="Villarroel R."/>
            <person name="De Clercq R."/>
            <person name="van Montagu M."/>
            <person name="Lecharny A."/>
            <person name="Aubourg S."/>
            <person name="Gy I."/>
            <person name="Kreis M."/>
            <person name="Lao N."/>
            <person name="Kavanagh T."/>
            <person name="Hempel S."/>
            <person name="Kotter P."/>
            <person name="Entian K.-D."/>
            <person name="Rieger M."/>
            <person name="Schaefer M."/>
            <person name="Funk B."/>
            <person name="Mueller-Auer S."/>
            <person name="Silvey M."/>
            <person name="James R."/>
            <person name="Monfort A."/>
            <person name="Pons A."/>
            <person name="Puigdomenech P."/>
            <person name="Douka A."/>
            <person name="Voukelatou E."/>
            <person name="Milioni D."/>
            <person name="Hatzopoulos P."/>
            <person name="Piravandi E."/>
            <person name="Obermaier B."/>
            <person name="Hilbert H."/>
            <person name="Duesterhoeft A."/>
            <person name="Moores T."/>
            <person name="Jones J.D.G."/>
            <person name="Eneva T."/>
            <person name="Palme K."/>
            <person name="Benes V."/>
            <person name="Rechmann S."/>
            <person name="Ansorge W."/>
            <person name="Cooke R."/>
            <person name="Berger C."/>
            <person name="Delseny M."/>
            <person name="Voet M."/>
            <person name="Volckaert G."/>
            <person name="Mewes H.-W."/>
            <person name="Klosterman S."/>
            <person name="Schueller C."/>
            <person name="Chalwatzis N."/>
        </authorList>
    </citation>
    <scope>NUCLEOTIDE SEQUENCE [LARGE SCALE GENOMIC DNA]</scope>
    <source>
        <strain>cv. Columbia</strain>
    </source>
</reference>
<reference key="3">
    <citation type="journal article" date="1999" name="Nature">
        <title>Sequence and analysis of chromosome 4 of the plant Arabidopsis thaliana.</title>
        <authorList>
            <person name="Mayer K.F.X."/>
            <person name="Schueller C."/>
            <person name="Wambutt R."/>
            <person name="Murphy G."/>
            <person name="Volckaert G."/>
            <person name="Pohl T."/>
            <person name="Duesterhoeft A."/>
            <person name="Stiekema W."/>
            <person name="Entian K.-D."/>
            <person name="Terryn N."/>
            <person name="Harris B."/>
            <person name="Ansorge W."/>
            <person name="Brandt P."/>
            <person name="Grivell L.A."/>
            <person name="Rieger M."/>
            <person name="Weichselgartner M."/>
            <person name="de Simone V."/>
            <person name="Obermaier B."/>
            <person name="Mache R."/>
            <person name="Mueller M."/>
            <person name="Kreis M."/>
            <person name="Delseny M."/>
            <person name="Puigdomenech P."/>
            <person name="Watson M."/>
            <person name="Schmidtheini T."/>
            <person name="Reichert B."/>
            <person name="Portetelle D."/>
            <person name="Perez-Alonso M."/>
            <person name="Boutry M."/>
            <person name="Bancroft I."/>
            <person name="Vos P."/>
            <person name="Hoheisel J."/>
            <person name="Zimmermann W."/>
            <person name="Wedler H."/>
            <person name="Ridley P."/>
            <person name="Langham S.-A."/>
            <person name="McCullagh B."/>
            <person name="Bilham L."/>
            <person name="Robben J."/>
            <person name="van der Schueren J."/>
            <person name="Grymonprez B."/>
            <person name="Chuang Y.-J."/>
            <person name="Vandenbussche F."/>
            <person name="Braeken M."/>
            <person name="Weltjens I."/>
            <person name="Voet M."/>
            <person name="Bastiaens I."/>
            <person name="Aert R."/>
            <person name="Defoor E."/>
            <person name="Weitzenegger T."/>
            <person name="Bothe G."/>
            <person name="Ramsperger U."/>
            <person name="Hilbert H."/>
            <person name="Braun M."/>
            <person name="Holzer E."/>
            <person name="Brandt A."/>
            <person name="Peters S."/>
            <person name="van Staveren M."/>
            <person name="Dirkse W."/>
            <person name="Mooijman P."/>
            <person name="Klein Lankhorst R."/>
            <person name="Rose M."/>
            <person name="Hauf J."/>
            <person name="Koetter P."/>
            <person name="Berneiser S."/>
            <person name="Hempel S."/>
            <person name="Feldpausch M."/>
            <person name="Lamberth S."/>
            <person name="Van den Daele H."/>
            <person name="De Keyser A."/>
            <person name="Buysshaert C."/>
            <person name="Gielen J."/>
            <person name="Villarroel R."/>
            <person name="De Clercq R."/>
            <person name="van Montagu M."/>
            <person name="Rogers J."/>
            <person name="Cronin A."/>
            <person name="Quail M.A."/>
            <person name="Bray-Allen S."/>
            <person name="Clark L."/>
            <person name="Doggett J."/>
            <person name="Hall S."/>
            <person name="Kay M."/>
            <person name="Lennard N."/>
            <person name="McLay K."/>
            <person name="Mayes R."/>
            <person name="Pettett A."/>
            <person name="Rajandream M.A."/>
            <person name="Lyne M."/>
            <person name="Benes V."/>
            <person name="Rechmann S."/>
            <person name="Borkova D."/>
            <person name="Bloecker H."/>
            <person name="Scharfe M."/>
            <person name="Grimm M."/>
            <person name="Loehnert T.-H."/>
            <person name="Dose S."/>
            <person name="de Haan M."/>
            <person name="Maarse A.C."/>
            <person name="Schaefer M."/>
            <person name="Mueller-Auer S."/>
            <person name="Gabel C."/>
            <person name="Fuchs M."/>
            <person name="Fartmann B."/>
            <person name="Granderath K."/>
            <person name="Dauner D."/>
            <person name="Herzl A."/>
            <person name="Neumann S."/>
            <person name="Argiriou A."/>
            <person name="Vitale D."/>
            <person name="Liguori R."/>
            <person name="Piravandi E."/>
            <person name="Massenet O."/>
            <person name="Quigley F."/>
            <person name="Clabauld G."/>
            <person name="Muendlein A."/>
            <person name="Felber R."/>
            <person name="Schnabl S."/>
            <person name="Hiller R."/>
            <person name="Schmidt W."/>
            <person name="Lecharny A."/>
            <person name="Aubourg S."/>
            <person name="Chefdor F."/>
            <person name="Cooke R."/>
            <person name="Berger C."/>
            <person name="Monfort A."/>
            <person name="Casacuberta E."/>
            <person name="Gibbons T."/>
            <person name="Weber N."/>
            <person name="Vandenbol M."/>
            <person name="Bargues M."/>
            <person name="Terol J."/>
            <person name="Torres A."/>
            <person name="Perez-Perez A."/>
            <person name="Purnelle B."/>
            <person name="Bent E."/>
            <person name="Johnson S."/>
            <person name="Tacon D."/>
            <person name="Jesse T."/>
            <person name="Heijnen L."/>
            <person name="Schwarz S."/>
            <person name="Scholler P."/>
            <person name="Heber S."/>
            <person name="Francs P."/>
            <person name="Bielke C."/>
            <person name="Frishman D."/>
            <person name="Haase D."/>
            <person name="Lemcke K."/>
            <person name="Mewes H.-W."/>
            <person name="Stocker S."/>
            <person name="Zaccaria P."/>
            <person name="Bevan M."/>
            <person name="Wilson R.K."/>
            <person name="de la Bastide M."/>
            <person name="Habermann K."/>
            <person name="Parnell L."/>
            <person name="Dedhia N."/>
            <person name="Gnoj L."/>
            <person name="Schutz K."/>
            <person name="Huang E."/>
            <person name="Spiegel L."/>
            <person name="Sekhon M."/>
            <person name="Murray J."/>
            <person name="Sheet P."/>
            <person name="Cordes M."/>
            <person name="Abu-Threideh J."/>
            <person name="Stoneking T."/>
            <person name="Kalicki J."/>
            <person name="Graves T."/>
            <person name="Harmon G."/>
            <person name="Edwards J."/>
            <person name="Latreille P."/>
            <person name="Courtney L."/>
            <person name="Cloud J."/>
            <person name="Abbott A."/>
            <person name="Scott K."/>
            <person name="Johnson D."/>
            <person name="Minx P."/>
            <person name="Bentley D."/>
            <person name="Fulton B."/>
            <person name="Miller N."/>
            <person name="Greco T."/>
            <person name="Kemp K."/>
            <person name="Kramer J."/>
            <person name="Fulton L."/>
            <person name="Mardis E."/>
            <person name="Dante M."/>
            <person name="Pepin K."/>
            <person name="Hillier L.W."/>
            <person name="Nelson J."/>
            <person name="Spieth J."/>
            <person name="Ryan E."/>
            <person name="Andrews S."/>
            <person name="Geisel C."/>
            <person name="Layman D."/>
            <person name="Du H."/>
            <person name="Ali J."/>
            <person name="Berghoff A."/>
            <person name="Jones K."/>
            <person name="Drone K."/>
            <person name="Cotton M."/>
            <person name="Joshu C."/>
            <person name="Antonoiu B."/>
            <person name="Zidanic M."/>
            <person name="Strong C."/>
            <person name="Sun H."/>
            <person name="Lamar B."/>
            <person name="Yordan C."/>
            <person name="Ma P."/>
            <person name="Zhong J."/>
            <person name="Preston R."/>
            <person name="Vil D."/>
            <person name="Shekher M."/>
            <person name="Matero A."/>
            <person name="Shah R."/>
            <person name="Swaby I.K."/>
            <person name="O'Shaughnessy A."/>
            <person name="Rodriguez M."/>
            <person name="Hoffman J."/>
            <person name="Till S."/>
            <person name="Granat S."/>
            <person name="Shohdy N."/>
            <person name="Hasegawa A."/>
            <person name="Hameed A."/>
            <person name="Lodhi M."/>
            <person name="Johnson A."/>
            <person name="Chen E."/>
            <person name="Marra M.A."/>
            <person name="Martienssen R."/>
            <person name="McCombie W.R."/>
        </authorList>
    </citation>
    <scope>NUCLEOTIDE SEQUENCE [LARGE SCALE GENOMIC DNA]</scope>
    <source>
        <strain>cv. Columbia</strain>
    </source>
</reference>
<reference key="4">
    <citation type="journal article" date="2017" name="Plant J.">
        <title>Araport11: a complete reannotation of the Arabidopsis thaliana reference genome.</title>
        <authorList>
            <person name="Cheng C.Y."/>
            <person name="Krishnakumar V."/>
            <person name="Chan A.P."/>
            <person name="Thibaud-Nissen F."/>
            <person name="Schobel S."/>
            <person name="Town C.D."/>
        </authorList>
    </citation>
    <scope>GENOME REANNOTATION</scope>
    <source>
        <strain>cv. Columbia</strain>
    </source>
</reference>
<reference key="5">
    <citation type="journal article" date="2009" name="Plant Cell Physiol.">
        <title>Isozyme-specific modes of activation of CTP:phosphorylcholine cytidylyltransferase in Arabidopsis thaliana at low temperature.</title>
        <authorList>
            <person name="Inatsugi R."/>
            <person name="Kawai H."/>
            <person name="Yamaoka Y."/>
            <person name="Yu Y."/>
            <person name="Sekiguchi A."/>
            <person name="Nakamura M."/>
            <person name="Nishida I."/>
        </authorList>
    </citation>
    <scope>FUNCTION</scope>
    <scope>DISRUPTION PHENOTYPE</scope>
</reference>
<dbReference type="EC" id="2.7.7.15" evidence="3"/>
<dbReference type="EMBL" id="AB056715">
    <property type="protein sequence ID" value="BAC01276.1"/>
    <property type="molecule type" value="Genomic_DNA"/>
</dbReference>
<dbReference type="EMBL" id="AB056716">
    <property type="protein sequence ID" value="BAC01277.1"/>
    <property type="molecule type" value="mRNA"/>
</dbReference>
<dbReference type="EMBL" id="Z97338">
    <property type="protein sequence ID" value="CAB45996.1"/>
    <property type="status" value="ALT_SEQ"/>
    <property type="molecule type" value="Genomic_DNA"/>
</dbReference>
<dbReference type="EMBL" id="AL161540">
    <property type="protein sequence ID" value="CAB78555.1"/>
    <property type="status" value="ALT_SEQ"/>
    <property type="molecule type" value="Genomic_DNA"/>
</dbReference>
<dbReference type="EMBL" id="CP002687">
    <property type="protein sequence ID" value="AEE83559.1"/>
    <property type="molecule type" value="Genomic_DNA"/>
</dbReference>
<dbReference type="PIR" id="B71415">
    <property type="entry name" value="B71415"/>
</dbReference>
<dbReference type="PIR" id="E85166">
    <property type="entry name" value="E85166"/>
</dbReference>
<dbReference type="RefSeq" id="NP_193249.5">
    <property type="nucleotide sequence ID" value="NM_117602.9"/>
</dbReference>
<dbReference type="SMR" id="F4JJE0"/>
<dbReference type="BioGRID" id="12476">
    <property type="interactions" value="2"/>
</dbReference>
<dbReference type="FunCoup" id="F4JJE0">
    <property type="interactions" value="1269"/>
</dbReference>
<dbReference type="STRING" id="3702.F4JJE0"/>
<dbReference type="PaxDb" id="3702-AT4G15130.1"/>
<dbReference type="ProteomicsDB" id="223938"/>
<dbReference type="GeneID" id="827179"/>
<dbReference type="KEGG" id="ath:AT4G15130"/>
<dbReference type="Araport" id="AT4G15130"/>
<dbReference type="TAIR" id="AT4G15130"/>
<dbReference type="eggNOG" id="KOG2804">
    <property type="taxonomic scope" value="Eukaryota"/>
</dbReference>
<dbReference type="HOGENOM" id="CLU_916977_0_0_1"/>
<dbReference type="InParanoid" id="F4JJE0"/>
<dbReference type="UniPathway" id="UPA00753">
    <property type="reaction ID" value="UER00739"/>
</dbReference>
<dbReference type="PRO" id="PR:F4JJE0"/>
<dbReference type="Proteomes" id="UP000006548">
    <property type="component" value="Chromosome 4"/>
</dbReference>
<dbReference type="ExpressionAtlas" id="F4JJE0">
    <property type="expression patterns" value="baseline and differential"/>
</dbReference>
<dbReference type="GO" id="GO:0004105">
    <property type="term" value="F:choline-phosphate cytidylyltransferase activity"/>
    <property type="evidence" value="ECO:0000315"/>
    <property type="project" value="TAIR"/>
</dbReference>
<dbReference type="GO" id="GO:0006656">
    <property type="term" value="P:phosphatidylcholine biosynthetic process"/>
    <property type="evidence" value="ECO:0000315"/>
    <property type="project" value="TAIR"/>
</dbReference>
<dbReference type="CDD" id="cd02174">
    <property type="entry name" value="CCT"/>
    <property type="match status" value="1"/>
</dbReference>
<dbReference type="FunFam" id="3.40.50.620:FF:000102">
    <property type="entry name" value="Choline-phosphate cytidylyltransferase 2"/>
    <property type="match status" value="1"/>
</dbReference>
<dbReference type="Gene3D" id="3.40.50.620">
    <property type="entry name" value="HUPs"/>
    <property type="match status" value="1"/>
</dbReference>
<dbReference type="InterPro" id="IPR041723">
    <property type="entry name" value="CCT"/>
</dbReference>
<dbReference type="InterPro" id="IPR004821">
    <property type="entry name" value="Cyt_trans-like"/>
</dbReference>
<dbReference type="InterPro" id="IPR045049">
    <property type="entry name" value="Pcy1-like"/>
</dbReference>
<dbReference type="InterPro" id="IPR014729">
    <property type="entry name" value="Rossmann-like_a/b/a_fold"/>
</dbReference>
<dbReference type="NCBIfam" id="TIGR00125">
    <property type="entry name" value="cyt_tran_rel"/>
    <property type="match status" value="1"/>
</dbReference>
<dbReference type="PANTHER" id="PTHR10739:SF48">
    <property type="entry name" value="CHOLINE-PHOSPHATE CYTIDYLYLTRANSFERASE 2"/>
    <property type="match status" value="1"/>
</dbReference>
<dbReference type="PANTHER" id="PTHR10739">
    <property type="entry name" value="CYTIDYLYLTRANSFERASE"/>
    <property type="match status" value="1"/>
</dbReference>
<dbReference type="Pfam" id="PF01467">
    <property type="entry name" value="CTP_transf_like"/>
    <property type="match status" value="1"/>
</dbReference>
<dbReference type="SUPFAM" id="SSF52374">
    <property type="entry name" value="Nucleotidylyl transferase"/>
    <property type="match status" value="1"/>
</dbReference>
<accession>F4JJE0</accession>
<accession>O23367</accession>
<accession>Q8L4J8</accession>
<name>CCT2_ARATH</name>
<proteinExistence type="evidence at protein level"/>
<comment type="function">
    <text evidence="3 4">Plays an important role in the biosynthesis of the phospholipid phosphatidylcholine (PubMed:12461134, PubMed:19667100). Catalyzes the formation of CDP-choline (PubMed:12461134, PubMed:19667100).</text>
</comment>
<comment type="catalytic activity">
    <reaction evidence="3">
        <text>phosphocholine + CTP + H(+) = CDP-choline + diphosphate</text>
        <dbReference type="Rhea" id="RHEA:18997"/>
        <dbReference type="ChEBI" id="CHEBI:15378"/>
        <dbReference type="ChEBI" id="CHEBI:33019"/>
        <dbReference type="ChEBI" id="CHEBI:37563"/>
        <dbReference type="ChEBI" id="CHEBI:58779"/>
        <dbReference type="ChEBI" id="CHEBI:295975"/>
        <dbReference type="EC" id="2.7.7.15"/>
    </reaction>
    <physiologicalReaction direction="left-to-right" evidence="3">
        <dbReference type="Rhea" id="RHEA:18998"/>
    </physiologicalReaction>
</comment>
<comment type="biophysicochemical properties">
    <temperatureDependence>
        <text evidence="3">Optimum temperature is 30 degrees Celsius.</text>
    </temperatureDependence>
</comment>
<comment type="pathway">
    <text evidence="7">Phospholipid metabolism; phosphatidylcholine biosynthesis; phosphatidylcholine from phosphocholine: step 1/2.</text>
</comment>
<comment type="induction">
    <text evidence="3">By cold treatment.</text>
</comment>
<comment type="disruption phenotype">
    <text evidence="4">No visible phenotype under normal growth conditions.</text>
</comment>
<comment type="similarity">
    <text evidence="7">Belongs to the cytidylyltransferase family.</text>
</comment>
<comment type="sequence caution" evidence="7">
    <conflict type="erroneous gene model prediction">
        <sequence resource="EMBL-CDS" id="CAB45996"/>
    </conflict>
</comment>
<comment type="sequence caution" evidence="7">
    <conflict type="erroneous gene model prediction">
        <sequence resource="EMBL-CDS" id="CAB78555"/>
    </conflict>
</comment>
<organism>
    <name type="scientific">Arabidopsis thaliana</name>
    <name type="common">Mouse-ear cress</name>
    <dbReference type="NCBI Taxonomy" id="3702"/>
    <lineage>
        <taxon>Eukaryota</taxon>
        <taxon>Viridiplantae</taxon>
        <taxon>Streptophyta</taxon>
        <taxon>Embryophyta</taxon>
        <taxon>Tracheophyta</taxon>
        <taxon>Spermatophyta</taxon>
        <taxon>Magnoliopsida</taxon>
        <taxon>eudicotyledons</taxon>
        <taxon>Gunneridae</taxon>
        <taxon>Pentapetalae</taxon>
        <taxon>rosids</taxon>
        <taxon>malvids</taxon>
        <taxon>Brassicales</taxon>
        <taxon>Brassicaceae</taxon>
        <taxon>Camelineae</taxon>
        <taxon>Arabidopsis</taxon>
    </lineage>
</organism>
<feature type="chain" id="PRO_0000423343" description="Choline-phosphate cytidylyltransferase 2">
    <location>
        <begin position="1"/>
        <end position="304"/>
    </location>
</feature>
<feature type="region of interest" description="Disordered" evidence="2">
    <location>
        <begin position="266"/>
        <end position="292"/>
    </location>
</feature>
<feature type="compositionally biased region" description="Acidic residues" evidence="2">
    <location>
        <begin position="275"/>
        <end position="291"/>
    </location>
</feature>
<feature type="binding site" evidence="1">
    <location>
        <begin position="28"/>
        <end position="36"/>
    </location>
    <ligand>
        <name>CTP</name>
        <dbReference type="ChEBI" id="CHEBI:37563"/>
    </ligand>
</feature>
<feature type="binding site" evidence="1">
    <location>
        <position position="66"/>
    </location>
    <ligand>
        <name>CTP</name>
        <dbReference type="ChEBI" id="CHEBI:37563"/>
    </ligand>
</feature>
<feature type="binding site" evidence="1">
    <location>
        <position position="66"/>
    </location>
    <ligand>
        <name>substrate</name>
    </ligand>
</feature>
<feature type="binding site" evidence="1">
    <location>
        <position position="95"/>
    </location>
    <ligand>
        <name>substrate</name>
    </ligand>
</feature>
<feature type="binding site" evidence="1">
    <location>
        <begin position="112"/>
        <end position="113"/>
    </location>
    <ligand>
        <name>CTP</name>
        <dbReference type="ChEBI" id="CHEBI:37563"/>
    </ligand>
</feature>
<feature type="binding site" evidence="1">
    <location>
        <position position="117"/>
    </location>
    <ligand>
        <name>CTP</name>
        <dbReference type="ChEBI" id="CHEBI:37563"/>
    </ligand>
</feature>
<feature type="binding site" evidence="1">
    <location>
        <begin position="142"/>
        <end position="146"/>
    </location>
    <ligand>
        <name>CTP</name>
        <dbReference type="ChEBI" id="CHEBI:37563"/>
    </ligand>
</feature>
<feature type="sequence conflict" description="In Ref. 1; BAC01276/BAC01277." evidence="7" ref="1">
    <original>E</original>
    <variation>VK</variation>
    <location>
        <position position="181"/>
    </location>
</feature>
<keyword id="KW-0444">Lipid biosynthesis</keyword>
<keyword id="KW-0443">Lipid metabolism</keyword>
<keyword id="KW-0548">Nucleotidyltransferase</keyword>
<keyword id="KW-0594">Phospholipid biosynthesis</keyword>
<keyword id="KW-1208">Phospholipid metabolism</keyword>
<keyword id="KW-1185">Reference proteome</keyword>
<keyword id="KW-0808">Transferase</keyword>
<protein>
    <recommendedName>
        <fullName evidence="7">Choline-phosphate cytidylyltransferase 2</fullName>
        <shortName evidence="5">AtCCT2</shortName>
        <ecNumber evidence="3">2.7.7.15</ecNumber>
    </recommendedName>
    <alternativeName>
        <fullName evidence="6">CTP:phosphocholine cytidylyltransferase 2</fullName>
    </alternativeName>
    <alternativeName>
        <fullName evidence="5">Phosphorylcholine transferase 2</fullName>
    </alternativeName>
</protein>
<gene>
    <name evidence="5" type="primary">CCT2</name>
    <name evidence="8" type="ordered locus">At4g15130</name>
    <name evidence="9" type="ORF">dl3610w</name>
    <name evidence="10" type="ORF">FCAALL.209</name>
</gene>
<sequence>MSVNGENKVSGGDSSSSDRPVRVYADGIFDLFHFGHARAIEQAKKSFPNTYLLVGCCNDEITNKFKGKTVMTESERYESLRHCKWVDEVIPDAPWVLTTEFLDKHKIDYVAHDALPYADTSGAGNDVYEFVKSIGKFKETKRTEGISTSDIIMRIVKDYNQYVLRNLDRGYSREELGVSFEEKRLRVNMRLKKLQEKVKEQQEKIQTVAKTAGMHHDEWLENADRWVAGFLEMFEEGCHKMGTAIRDGIQQRLMRQESEENRRLLQNGLTISKDNDDEQMSDDNEFAEEDCVNVSNKGIETVKK</sequence>